<dbReference type="EMBL" id="AF457465">
    <property type="protein sequence ID" value="AAN09925.1"/>
    <property type="molecule type" value="Genomic_DNA"/>
</dbReference>
<dbReference type="EMBL" id="AJ620206">
    <property type="protein sequence ID" value="CAF05672.1"/>
    <property type="molecule type" value="Genomic_DNA"/>
</dbReference>
<dbReference type="RefSeq" id="NP_694431.1">
    <property type="nucleotide sequence ID" value="NC_004195.1"/>
</dbReference>
<dbReference type="SMR" id="Q8BDG6"/>
<dbReference type="GeneID" id="955401"/>
<dbReference type="KEGG" id="vg:955401"/>
<dbReference type="Proteomes" id="UP000008785">
    <property type="component" value="Genome"/>
</dbReference>
<dbReference type="Proteomes" id="UP000185273">
    <property type="component" value="Genome"/>
</dbReference>
<dbReference type="GO" id="GO:0030430">
    <property type="term" value="C:host cell cytoplasm"/>
    <property type="evidence" value="ECO:0007669"/>
    <property type="project" value="UniProtKB-SubCell"/>
</dbReference>
<dbReference type="GO" id="GO:0042025">
    <property type="term" value="C:host cell nucleus"/>
    <property type="evidence" value="ECO:0007669"/>
    <property type="project" value="UniProtKB-SubCell"/>
</dbReference>
<dbReference type="GO" id="GO:0003677">
    <property type="term" value="F:DNA binding"/>
    <property type="evidence" value="ECO:0007669"/>
    <property type="project" value="UniProtKB-UniRule"/>
</dbReference>
<dbReference type="GO" id="GO:0003700">
    <property type="term" value="F:DNA-binding transcription factor activity"/>
    <property type="evidence" value="ECO:0007669"/>
    <property type="project" value="UniProtKB-UniRule"/>
</dbReference>
<dbReference type="GO" id="GO:0019904">
    <property type="term" value="F:protein domain specific binding"/>
    <property type="evidence" value="ECO:0007669"/>
    <property type="project" value="UniProtKB-UniRule"/>
</dbReference>
<dbReference type="GO" id="GO:0008270">
    <property type="term" value="F:zinc ion binding"/>
    <property type="evidence" value="ECO:0007669"/>
    <property type="project" value="UniProtKB-KW"/>
</dbReference>
<dbReference type="GO" id="GO:0006351">
    <property type="term" value="P:DNA-templated transcription"/>
    <property type="evidence" value="ECO:0007669"/>
    <property type="project" value="UniProtKB-UniRule"/>
</dbReference>
<dbReference type="GO" id="GO:0039645">
    <property type="term" value="P:symbiont-mediated perturbation of host cell cycle G1/S transition checkpoint"/>
    <property type="evidence" value="ECO:0007669"/>
    <property type="project" value="UniProtKB-UniRule"/>
</dbReference>
<dbReference type="GO" id="GO:0052170">
    <property type="term" value="P:symbiont-mediated suppression of host innate immune response"/>
    <property type="evidence" value="ECO:0007669"/>
    <property type="project" value="UniProtKB-KW"/>
</dbReference>
<dbReference type="GO" id="GO:0039502">
    <property type="term" value="P:symbiont-mediated suppression of host type I interferon-mediated signaling pathway"/>
    <property type="evidence" value="ECO:0007669"/>
    <property type="project" value="UniProtKB-UniRule"/>
</dbReference>
<dbReference type="Gene3D" id="3.30.160.330">
    <property type="match status" value="1"/>
</dbReference>
<dbReference type="HAMAP" id="MF_04004">
    <property type="entry name" value="PPV_E7"/>
    <property type="match status" value="1"/>
</dbReference>
<dbReference type="InterPro" id="IPR000148">
    <property type="entry name" value="Papilloma_E7"/>
</dbReference>
<dbReference type="Pfam" id="PF00527">
    <property type="entry name" value="E7"/>
    <property type="match status" value="1"/>
</dbReference>
<dbReference type="SUPFAM" id="SSF161234">
    <property type="entry name" value="E7 C-terminal domain-like"/>
    <property type="match status" value="1"/>
</dbReference>
<reference key="1">
    <citation type="journal article" date="2002" name="J. Virol.">
        <title>Lack of canonical E6 and E7 open reading frames in bird papillomaviruses: Fringilla coelebs papillomavirus and Psittacus erithacus timneh papillomavirus.</title>
        <authorList>
            <person name="Terai M."/>
            <person name="DeSalle R."/>
            <person name="Burk R.D."/>
        </authorList>
    </citation>
    <scope>NUCLEOTIDE SEQUENCE [GENOMIC DNA]</scope>
</reference>
<reference key="2">
    <citation type="submission" date="2004-01" db="EMBL/GenBank/DDBJ databases">
        <title>Sequencing of the complete genomes of BPV 3, BPV 5 and BPV 6.</title>
        <authorList>
            <person name="Delius H."/>
            <person name="de Villiers E.M."/>
        </authorList>
    </citation>
    <scope>NUCLEOTIDE SEQUENCE [GENOMIC DNA]</scope>
</reference>
<accession>Q8BDG6</accession>
<gene>
    <name evidence="2" type="primary">E7</name>
</gene>
<sequence length="124" mass="13806">MVAGPACSKFLPQDPPPPSVTLVLHDLTQEEDEQDFVTLHAQYRPTFKDKTPRRPGYNPRAAPCHIQRLSARCSVFFVQVGCPCGQPLKIAVQSTPDCISQFEQLLRGPLDLLCPHCASRCYGR</sequence>
<comment type="function">
    <text evidence="2">Plays a role in viral genome replication by driving entry of quiescent cells into the cell cycle. Stimulation of progression from G1 to S phase allows the virus to efficiently use the cellular DNA replicating machinery to achieve viral genome replication. E7 protein has both transforming and trans-activating activities. Induces the disassembly of the E2F1 transcription factor from RB1, with subsequent transcriptional activation of E2F1-regulated S-phase genes. Interferes with host histone deacetylation mediated by HDAC1 and HDAC2, leading to transcription activation. Also plays a role in the inhibition of both antiviral and antiproliferative functions of host interferon alpha. Interaction with host TMEM173/STING impairs the ability of TMEM173/STING to sense cytosolic DNA and promote the production of type I interferon (IFN-alpha and IFN-beta).</text>
</comment>
<comment type="subunit">
    <text evidence="2">Homodimer. Homooligomer. Interacts with host RB1; this interaction induces dissociation of RB1-E2F1 complex thereby disrupting RB1 activity. Interacts with host EP300; this interaction represses EP300 transcriptional activity. Interacts with protein E2; this interaction inhibits E7 oncogenic activity. Interacts with host TMEM173/STING; this interaction impairs the ability of TMEM173/STING to sense cytosolic DNA and promote the production of type I interferon (IFN-alpha and IFN-beta).</text>
</comment>
<comment type="subcellular location">
    <subcellularLocation>
        <location evidence="2">Host cytoplasm</location>
    </subcellularLocation>
    <subcellularLocation>
        <location evidence="2">Host nucleus</location>
    </subcellularLocation>
    <text evidence="2">Predominantly found in the host nucleus.</text>
</comment>
<comment type="domain">
    <text evidence="2">The E7 terminal domain is an intrinsically disordered domain, whose flexibility and conformational transitions confer target adaptability to the oncoprotein. It allows adaptation to a variety of protein targets and exposes the PEST degradation sequence that regulates its turnover in the cell.</text>
</comment>
<comment type="PTM">
    <text evidence="2">Highly phosphorylated.</text>
</comment>
<comment type="similarity">
    <text evidence="2">Belongs to the papillomaviridae E7 protein family.</text>
</comment>
<protein>
    <recommendedName>
        <fullName evidence="2">Protein E7</fullName>
    </recommendedName>
</protein>
<name>VE7_BPV5</name>
<organism>
    <name type="scientific">Bovine papillomavirus type 5</name>
    <dbReference type="NCBI Taxonomy" id="2491661"/>
    <lineage>
        <taxon>Viruses</taxon>
        <taxon>Monodnaviria</taxon>
        <taxon>Shotokuvirae</taxon>
        <taxon>Cossaviricota</taxon>
        <taxon>Papovaviricetes</taxon>
        <taxon>Zurhausenvirales</taxon>
        <taxon>Papillomaviridae</taxon>
        <taxon>Firstpapillomavirinae</taxon>
        <taxon>Epsilonpapillomavirus</taxon>
        <taxon>Epsilonpapillomavirus 1</taxon>
    </lineage>
</organism>
<feature type="chain" id="PRO_0000133396" description="Protein E7">
    <location>
        <begin position="1"/>
        <end position="124"/>
    </location>
</feature>
<feature type="zinc finger region" evidence="1">
    <location>
        <begin position="82"/>
        <end position="117"/>
    </location>
</feature>
<feature type="region of interest" description="E7 terminal domain" evidence="2">
    <location>
        <begin position="2"/>
        <end position="51"/>
    </location>
</feature>
<feature type="short sequence motif" description="Nuclear export signal" evidence="2">
    <location>
        <begin position="99"/>
        <end position="107"/>
    </location>
</feature>
<proteinExistence type="inferred from homology"/>
<organismHost>
    <name type="scientific">Bos taurus</name>
    <name type="common">Bovine</name>
    <dbReference type="NCBI Taxonomy" id="9913"/>
</organismHost>
<evidence type="ECO:0000250" key="1">
    <source>
        <dbReference type="UniProtKB" id="P03129"/>
    </source>
</evidence>
<evidence type="ECO:0000255" key="2">
    <source>
        <dbReference type="HAMAP-Rule" id="MF_04004"/>
    </source>
</evidence>
<keyword id="KW-0010">Activator</keyword>
<keyword id="KW-0238">DNA-binding</keyword>
<keyword id="KW-0244">Early protein</keyword>
<keyword id="KW-1078">G1/S host cell cycle checkpoint dysregulation by virus</keyword>
<keyword id="KW-1035">Host cytoplasm</keyword>
<keyword id="KW-1048">Host nucleus</keyword>
<keyword id="KW-0945">Host-virus interaction</keyword>
<keyword id="KW-1090">Inhibition of host innate immune response by virus</keyword>
<keyword id="KW-1114">Inhibition of host interferon signaling pathway by virus</keyword>
<keyword id="KW-0922">Interferon antiviral system evasion</keyword>
<keyword id="KW-0479">Metal-binding</keyword>
<keyword id="KW-1121">Modulation of host cell cycle by virus</keyword>
<keyword id="KW-0553">Oncogene</keyword>
<keyword id="KW-1185">Reference proteome</keyword>
<keyword id="KW-0804">Transcription</keyword>
<keyword id="KW-0805">Transcription regulation</keyword>
<keyword id="KW-0899">Viral immunoevasion</keyword>
<keyword id="KW-0862">Zinc</keyword>
<keyword id="KW-0863">Zinc-finger</keyword>